<accession>A1T058</accession>
<sequence length="156" mass="17332">MPRRRVVGTRKILPDPKFGSEVLAKFVNVVMVDGKKSIAEKIVYGALEAAASKSGKVALDLFEVALENIRPSVEVKSRRVGGSTYQVPVEVRPSRRNALAMRWLVEASRKRGEKSMALRLAGELVDASDNKGSAVKKREDVHRMADANKAFAHYRW</sequence>
<proteinExistence type="inferred from homology"/>
<reference key="1">
    <citation type="journal article" date="2008" name="BMC Genomics">
        <title>Genomics of an extreme psychrophile, Psychromonas ingrahamii.</title>
        <authorList>
            <person name="Riley M."/>
            <person name="Staley J.T."/>
            <person name="Danchin A."/>
            <person name="Wang T.Z."/>
            <person name="Brettin T.S."/>
            <person name="Hauser L.J."/>
            <person name="Land M.L."/>
            <person name="Thompson L.S."/>
        </authorList>
    </citation>
    <scope>NUCLEOTIDE SEQUENCE [LARGE SCALE GENOMIC DNA]</scope>
    <source>
        <strain>DSM 17664 / CCUG 51855 / 37</strain>
    </source>
</reference>
<gene>
    <name evidence="1" type="primary">rpsG</name>
    <name type="ordered locus">Ping_3439</name>
</gene>
<evidence type="ECO:0000255" key="1">
    <source>
        <dbReference type="HAMAP-Rule" id="MF_00480"/>
    </source>
</evidence>
<evidence type="ECO:0000305" key="2"/>
<name>RS7_PSYIN</name>
<dbReference type="EMBL" id="CP000510">
    <property type="protein sequence ID" value="ABM05123.1"/>
    <property type="molecule type" value="Genomic_DNA"/>
</dbReference>
<dbReference type="RefSeq" id="WP_011771675.1">
    <property type="nucleotide sequence ID" value="NC_008709.1"/>
</dbReference>
<dbReference type="SMR" id="A1T058"/>
<dbReference type="STRING" id="357804.Ping_3439"/>
<dbReference type="KEGG" id="pin:Ping_3439"/>
<dbReference type="eggNOG" id="COG0049">
    <property type="taxonomic scope" value="Bacteria"/>
</dbReference>
<dbReference type="HOGENOM" id="CLU_072226_1_1_6"/>
<dbReference type="OrthoDB" id="9807653at2"/>
<dbReference type="Proteomes" id="UP000000639">
    <property type="component" value="Chromosome"/>
</dbReference>
<dbReference type="GO" id="GO:0015935">
    <property type="term" value="C:small ribosomal subunit"/>
    <property type="evidence" value="ECO:0007669"/>
    <property type="project" value="InterPro"/>
</dbReference>
<dbReference type="GO" id="GO:0019843">
    <property type="term" value="F:rRNA binding"/>
    <property type="evidence" value="ECO:0007669"/>
    <property type="project" value="UniProtKB-UniRule"/>
</dbReference>
<dbReference type="GO" id="GO:0003735">
    <property type="term" value="F:structural constituent of ribosome"/>
    <property type="evidence" value="ECO:0007669"/>
    <property type="project" value="InterPro"/>
</dbReference>
<dbReference type="GO" id="GO:0000049">
    <property type="term" value="F:tRNA binding"/>
    <property type="evidence" value="ECO:0007669"/>
    <property type="project" value="UniProtKB-UniRule"/>
</dbReference>
<dbReference type="GO" id="GO:0006412">
    <property type="term" value="P:translation"/>
    <property type="evidence" value="ECO:0007669"/>
    <property type="project" value="UniProtKB-UniRule"/>
</dbReference>
<dbReference type="CDD" id="cd14869">
    <property type="entry name" value="uS7_Bacteria"/>
    <property type="match status" value="1"/>
</dbReference>
<dbReference type="FunFam" id="1.10.455.10:FF:000001">
    <property type="entry name" value="30S ribosomal protein S7"/>
    <property type="match status" value="1"/>
</dbReference>
<dbReference type="Gene3D" id="1.10.455.10">
    <property type="entry name" value="Ribosomal protein S7 domain"/>
    <property type="match status" value="1"/>
</dbReference>
<dbReference type="HAMAP" id="MF_00480_B">
    <property type="entry name" value="Ribosomal_uS7_B"/>
    <property type="match status" value="1"/>
</dbReference>
<dbReference type="InterPro" id="IPR000235">
    <property type="entry name" value="Ribosomal_uS7"/>
</dbReference>
<dbReference type="InterPro" id="IPR005717">
    <property type="entry name" value="Ribosomal_uS7_bac/org-type"/>
</dbReference>
<dbReference type="InterPro" id="IPR020606">
    <property type="entry name" value="Ribosomal_uS7_CS"/>
</dbReference>
<dbReference type="InterPro" id="IPR023798">
    <property type="entry name" value="Ribosomal_uS7_dom"/>
</dbReference>
<dbReference type="InterPro" id="IPR036823">
    <property type="entry name" value="Ribosomal_uS7_dom_sf"/>
</dbReference>
<dbReference type="NCBIfam" id="TIGR01029">
    <property type="entry name" value="rpsG_bact"/>
    <property type="match status" value="1"/>
</dbReference>
<dbReference type="PANTHER" id="PTHR11205">
    <property type="entry name" value="RIBOSOMAL PROTEIN S7"/>
    <property type="match status" value="1"/>
</dbReference>
<dbReference type="Pfam" id="PF00177">
    <property type="entry name" value="Ribosomal_S7"/>
    <property type="match status" value="1"/>
</dbReference>
<dbReference type="PIRSF" id="PIRSF002122">
    <property type="entry name" value="RPS7p_RPS7a_RPS5e_RPS7o"/>
    <property type="match status" value="1"/>
</dbReference>
<dbReference type="SUPFAM" id="SSF47973">
    <property type="entry name" value="Ribosomal protein S7"/>
    <property type="match status" value="1"/>
</dbReference>
<dbReference type="PROSITE" id="PS00052">
    <property type="entry name" value="RIBOSOMAL_S7"/>
    <property type="match status" value="1"/>
</dbReference>
<keyword id="KW-1185">Reference proteome</keyword>
<keyword id="KW-0687">Ribonucleoprotein</keyword>
<keyword id="KW-0689">Ribosomal protein</keyword>
<keyword id="KW-0694">RNA-binding</keyword>
<keyword id="KW-0699">rRNA-binding</keyword>
<keyword id="KW-0820">tRNA-binding</keyword>
<organism>
    <name type="scientific">Psychromonas ingrahamii (strain DSM 17664 / CCUG 51855 / 37)</name>
    <dbReference type="NCBI Taxonomy" id="357804"/>
    <lineage>
        <taxon>Bacteria</taxon>
        <taxon>Pseudomonadati</taxon>
        <taxon>Pseudomonadota</taxon>
        <taxon>Gammaproteobacteria</taxon>
        <taxon>Alteromonadales</taxon>
        <taxon>Psychromonadaceae</taxon>
        <taxon>Psychromonas</taxon>
    </lineage>
</organism>
<feature type="chain" id="PRO_1000014266" description="Small ribosomal subunit protein uS7">
    <location>
        <begin position="1"/>
        <end position="156"/>
    </location>
</feature>
<comment type="function">
    <text evidence="1">One of the primary rRNA binding proteins, it binds directly to 16S rRNA where it nucleates assembly of the head domain of the 30S subunit. Is located at the subunit interface close to the decoding center, probably blocks exit of the E-site tRNA.</text>
</comment>
<comment type="subunit">
    <text evidence="1">Part of the 30S ribosomal subunit. Contacts proteins S9 and S11.</text>
</comment>
<comment type="similarity">
    <text evidence="1">Belongs to the universal ribosomal protein uS7 family.</text>
</comment>
<protein>
    <recommendedName>
        <fullName evidence="1">Small ribosomal subunit protein uS7</fullName>
    </recommendedName>
    <alternativeName>
        <fullName evidence="2">30S ribosomal protein S7</fullName>
    </alternativeName>
</protein>